<sequence length="238" mass="25490">MSASPDYKTNLLSHLISNKVLSFGSYTLKSGRNSPYFFTTTLLHTAPLLHATASACASVLSSPPFVTTSTPDGTPRPNFDIIFGPAYKGIPLCTAVLNELGVRDTTGAWNNISYSFNRKEAKAHGEGGNIVGAPLKGKKIVIIDDVITAGTALREAVGIIEKEGGTVVGVLVLLDREERVNDNEKKSAVGCAQRDLGENVPVKAVLSLSDIIEKLGNDIGEENLKRLKEYRAQYGAEE</sequence>
<keyword id="KW-0328">Glycosyltransferase</keyword>
<keyword id="KW-0665">Pyrimidine biosynthesis</keyword>
<keyword id="KW-1185">Reference proteome</keyword>
<keyword id="KW-0808">Transferase</keyword>
<feature type="chain" id="PRO_0000252291" description="Orotate phosphoribosyltransferase">
    <location>
        <begin position="1"/>
        <end position="238"/>
    </location>
</feature>
<feature type="binding site" description="in other chain" evidence="1">
    <location>
        <position position="29"/>
    </location>
    <ligand>
        <name>5-phospho-alpha-D-ribose 1-diphosphate</name>
        <dbReference type="ChEBI" id="CHEBI:58017"/>
        <note>ligand shared between dimeric partners</note>
    </ligand>
</feature>
<feature type="binding site" evidence="1">
    <location>
        <begin position="37"/>
        <end position="38"/>
    </location>
    <ligand>
        <name>orotate</name>
        <dbReference type="ChEBI" id="CHEBI:30839"/>
    </ligand>
</feature>
<feature type="binding site" description="in other chain" evidence="1">
    <location>
        <begin position="87"/>
        <end position="88"/>
    </location>
    <ligand>
        <name>5-phospho-alpha-D-ribose 1-diphosphate</name>
        <dbReference type="ChEBI" id="CHEBI:58017"/>
        <note>ligand shared between dimeric partners</note>
    </ligand>
</feature>
<feature type="binding site" evidence="1">
    <location>
        <position position="118"/>
    </location>
    <ligand>
        <name>5-phospho-alpha-D-ribose 1-diphosphate</name>
        <dbReference type="ChEBI" id="CHEBI:58017"/>
        <note>ligand shared between dimeric partners</note>
    </ligand>
</feature>
<feature type="binding site" description="in other chain" evidence="1">
    <location>
        <position position="119"/>
    </location>
    <ligand>
        <name>5-phospho-alpha-D-ribose 1-diphosphate</name>
        <dbReference type="ChEBI" id="CHEBI:58017"/>
        <note>ligand shared between dimeric partners</note>
    </ligand>
</feature>
<feature type="binding site" evidence="1">
    <location>
        <position position="122"/>
    </location>
    <ligand>
        <name>5-phospho-alpha-D-ribose 1-diphosphate</name>
        <dbReference type="ChEBI" id="CHEBI:58017"/>
        <note>ligand shared between dimeric partners</note>
    </ligand>
</feature>
<feature type="binding site" evidence="1">
    <location>
        <position position="124"/>
    </location>
    <ligand>
        <name>5-phospho-alpha-D-ribose 1-diphosphate</name>
        <dbReference type="ChEBI" id="CHEBI:58017"/>
        <note>ligand shared between dimeric partners</note>
    </ligand>
</feature>
<feature type="binding site" description="in other chain" evidence="1">
    <location>
        <begin position="144"/>
        <end position="152"/>
    </location>
    <ligand>
        <name>5-phospho-alpha-D-ribose 1-diphosphate</name>
        <dbReference type="ChEBI" id="CHEBI:58017"/>
        <note>ligand shared between dimeric partners</note>
    </ligand>
</feature>
<feature type="binding site" evidence="1">
    <location>
        <position position="148"/>
    </location>
    <ligand>
        <name>orotate</name>
        <dbReference type="ChEBI" id="CHEBI:30839"/>
    </ligand>
</feature>
<feature type="binding site" evidence="1">
    <location>
        <position position="176"/>
    </location>
    <ligand>
        <name>orotate</name>
        <dbReference type="ChEBI" id="CHEBI:30839"/>
    </ligand>
</feature>
<name>PYRE_COCIM</name>
<reference key="1">
    <citation type="journal article" date="2009" name="Genome Res.">
        <title>Comparative genomic analyses of the human fungal pathogens Coccidioides and their relatives.</title>
        <authorList>
            <person name="Sharpton T.J."/>
            <person name="Stajich J.E."/>
            <person name="Rounsley S.D."/>
            <person name="Gardner M.J."/>
            <person name="Wortman J.R."/>
            <person name="Jordar V.S."/>
            <person name="Maiti R."/>
            <person name="Kodira C.D."/>
            <person name="Neafsey D.E."/>
            <person name="Zeng Q."/>
            <person name="Hung C.-Y."/>
            <person name="McMahan C."/>
            <person name="Muszewska A."/>
            <person name="Grynberg M."/>
            <person name="Mandel M.A."/>
            <person name="Kellner E.M."/>
            <person name="Barker B.M."/>
            <person name="Galgiani J.N."/>
            <person name="Orbach M.J."/>
            <person name="Kirkland T.N."/>
            <person name="Cole G.T."/>
            <person name="Henn M.R."/>
            <person name="Birren B.W."/>
            <person name="Taylor J.W."/>
        </authorList>
    </citation>
    <scope>NUCLEOTIDE SEQUENCE [LARGE SCALE GENOMIC DNA]</scope>
    <source>
        <strain>RS</strain>
    </source>
</reference>
<reference key="2">
    <citation type="journal article" date="2010" name="Genome Res.">
        <title>Population genomic sequencing of Coccidioides fungi reveals recent hybridization and transposon control.</title>
        <authorList>
            <person name="Neafsey D.E."/>
            <person name="Barker B.M."/>
            <person name="Sharpton T.J."/>
            <person name="Stajich J.E."/>
            <person name="Park D.J."/>
            <person name="Whiston E."/>
            <person name="Hung C.-Y."/>
            <person name="McMahan C."/>
            <person name="White J."/>
            <person name="Sykes S."/>
            <person name="Heiman D."/>
            <person name="Young S."/>
            <person name="Zeng Q."/>
            <person name="Abouelleil A."/>
            <person name="Aftuck L."/>
            <person name="Bessette D."/>
            <person name="Brown A."/>
            <person name="FitzGerald M."/>
            <person name="Lui A."/>
            <person name="Macdonald J.P."/>
            <person name="Priest M."/>
            <person name="Orbach M.J."/>
            <person name="Galgiani J.N."/>
            <person name="Kirkland T.N."/>
            <person name="Cole G.T."/>
            <person name="Birren B.W."/>
            <person name="Henn M.R."/>
            <person name="Taylor J.W."/>
            <person name="Rounsley S.D."/>
        </authorList>
    </citation>
    <scope>GENOME REANNOTATION</scope>
    <source>
        <strain>RS</strain>
    </source>
</reference>
<organism>
    <name type="scientific">Coccidioides immitis (strain RS)</name>
    <name type="common">Valley fever fungus</name>
    <dbReference type="NCBI Taxonomy" id="246410"/>
    <lineage>
        <taxon>Eukaryota</taxon>
        <taxon>Fungi</taxon>
        <taxon>Dikarya</taxon>
        <taxon>Ascomycota</taxon>
        <taxon>Pezizomycotina</taxon>
        <taxon>Eurotiomycetes</taxon>
        <taxon>Eurotiomycetidae</taxon>
        <taxon>Onygenales</taxon>
        <taxon>Onygenaceae</taxon>
        <taxon>Coccidioides</taxon>
    </lineage>
</organism>
<gene>
    <name type="primary">URA5</name>
    <name type="ORF">CIMG_08203</name>
</gene>
<protein>
    <recommendedName>
        <fullName>Orotate phosphoribosyltransferase</fullName>
        <shortName>OPRT</shortName>
        <shortName>OPRTase</shortName>
        <ecNumber>2.4.2.10</ecNumber>
    </recommendedName>
</protein>
<dbReference type="EC" id="2.4.2.10"/>
<dbReference type="EMBL" id="GG704913">
    <property type="protein sequence ID" value="EAS29457.3"/>
    <property type="molecule type" value="Genomic_DNA"/>
</dbReference>
<dbReference type="RefSeq" id="XP_001241040.1">
    <property type="nucleotide sequence ID" value="XM_001241039.2"/>
</dbReference>
<dbReference type="SMR" id="Q1DNB0"/>
<dbReference type="FunCoup" id="Q1DNB0">
    <property type="interactions" value="201"/>
</dbReference>
<dbReference type="STRING" id="246410.Q1DNB0"/>
<dbReference type="GeneID" id="4559297"/>
<dbReference type="KEGG" id="cim:CIMG_08203"/>
<dbReference type="VEuPathDB" id="FungiDB:CIMG_08203"/>
<dbReference type="InParanoid" id="Q1DNB0"/>
<dbReference type="OMA" id="SPFFMNA"/>
<dbReference type="OrthoDB" id="5553476at2759"/>
<dbReference type="UniPathway" id="UPA00070">
    <property type="reaction ID" value="UER00119"/>
</dbReference>
<dbReference type="Proteomes" id="UP000001261">
    <property type="component" value="Unassembled WGS sequence"/>
</dbReference>
<dbReference type="GO" id="GO:0005737">
    <property type="term" value="C:cytoplasm"/>
    <property type="evidence" value="ECO:0007669"/>
    <property type="project" value="TreeGrafter"/>
</dbReference>
<dbReference type="GO" id="GO:0004588">
    <property type="term" value="F:orotate phosphoribosyltransferase activity"/>
    <property type="evidence" value="ECO:0007669"/>
    <property type="project" value="UniProtKB-EC"/>
</dbReference>
<dbReference type="GO" id="GO:0006207">
    <property type="term" value="P:'de novo' pyrimidine nucleobase biosynthetic process"/>
    <property type="evidence" value="ECO:0007669"/>
    <property type="project" value="TreeGrafter"/>
</dbReference>
<dbReference type="GO" id="GO:0044205">
    <property type="term" value="P:'de novo' UMP biosynthetic process"/>
    <property type="evidence" value="ECO:0007669"/>
    <property type="project" value="UniProtKB-UniPathway"/>
</dbReference>
<dbReference type="GO" id="GO:0046132">
    <property type="term" value="P:pyrimidine ribonucleoside biosynthetic process"/>
    <property type="evidence" value="ECO:0007669"/>
    <property type="project" value="TreeGrafter"/>
</dbReference>
<dbReference type="CDD" id="cd06223">
    <property type="entry name" value="PRTases_typeI"/>
    <property type="match status" value="1"/>
</dbReference>
<dbReference type="FunFam" id="3.40.50.2020:FF:000008">
    <property type="entry name" value="Orotate phosphoribosyltransferase"/>
    <property type="match status" value="1"/>
</dbReference>
<dbReference type="Gene3D" id="3.40.50.2020">
    <property type="match status" value="1"/>
</dbReference>
<dbReference type="HAMAP" id="MF_01208">
    <property type="entry name" value="PyrE"/>
    <property type="match status" value="1"/>
</dbReference>
<dbReference type="InterPro" id="IPR023031">
    <property type="entry name" value="OPRT"/>
</dbReference>
<dbReference type="InterPro" id="IPR004467">
    <property type="entry name" value="Or_phspho_trans_dom"/>
</dbReference>
<dbReference type="InterPro" id="IPR000836">
    <property type="entry name" value="PRibTrfase_dom"/>
</dbReference>
<dbReference type="InterPro" id="IPR029057">
    <property type="entry name" value="PRTase-like"/>
</dbReference>
<dbReference type="NCBIfam" id="TIGR00336">
    <property type="entry name" value="pyrE"/>
    <property type="match status" value="1"/>
</dbReference>
<dbReference type="PANTHER" id="PTHR46683">
    <property type="entry name" value="OROTATE PHOSPHORIBOSYLTRANSFERASE 1-RELATED"/>
    <property type="match status" value="1"/>
</dbReference>
<dbReference type="PANTHER" id="PTHR46683:SF1">
    <property type="entry name" value="OROTATE PHOSPHORIBOSYLTRANSFERASE 1-RELATED"/>
    <property type="match status" value="1"/>
</dbReference>
<dbReference type="Pfam" id="PF00156">
    <property type="entry name" value="Pribosyltran"/>
    <property type="match status" value="1"/>
</dbReference>
<dbReference type="SUPFAM" id="SSF53271">
    <property type="entry name" value="PRTase-like"/>
    <property type="match status" value="1"/>
</dbReference>
<dbReference type="PROSITE" id="PS00103">
    <property type="entry name" value="PUR_PYR_PR_TRANSFER"/>
    <property type="match status" value="1"/>
</dbReference>
<comment type="function">
    <text evidence="1">Catalyzes the transfer of a ribosyl phosphate group from 5-phosphoribose 1-diphosphate to orotate, leading to the formation of orotidine monophosphate (OMP).</text>
</comment>
<comment type="catalytic activity">
    <reaction>
        <text>orotidine 5'-phosphate + diphosphate = orotate + 5-phospho-alpha-D-ribose 1-diphosphate</text>
        <dbReference type="Rhea" id="RHEA:10380"/>
        <dbReference type="ChEBI" id="CHEBI:30839"/>
        <dbReference type="ChEBI" id="CHEBI:33019"/>
        <dbReference type="ChEBI" id="CHEBI:57538"/>
        <dbReference type="ChEBI" id="CHEBI:58017"/>
        <dbReference type="EC" id="2.4.2.10"/>
    </reaction>
</comment>
<comment type="pathway">
    <text>Pyrimidine metabolism; UMP biosynthesis via de novo pathway; UMP from orotate: step 1/2.</text>
</comment>
<comment type="subunit">
    <text evidence="1">Homodimer.</text>
</comment>
<comment type="similarity">
    <text evidence="2">Belongs to the purine/pyrimidine phosphoribosyltransferase family. PyrE subfamily.</text>
</comment>
<proteinExistence type="inferred from homology"/>
<evidence type="ECO:0000250" key="1"/>
<evidence type="ECO:0000305" key="2"/>
<accession>Q1DNB0</accession>
<accession>J3K5S5</accession>